<organism>
    <name type="scientific">Nostoc sp. (strain PCC 7120 / SAG 25.82 / UTEX 2576)</name>
    <dbReference type="NCBI Taxonomy" id="103690"/>
    <lineage>
        <taxon>Bacteria</taxon>
        <taxon>Bacillati</taxon>
        <taxon>Cyanobacteriota</taxon>
        <taxon>Cyanophyceae</taxon>
        <taxon>Nostocales</taxon>
        <taxon>Nostocaceae</taxon>
        <taxon>Nostoc</taxon>
    </lineage>
</organism>
<proteinExistence type="inferred from homology"/>
<feature type="chain" id="PRO_0000138285" description="UvrABC system protein C">
    <location>
        <begin position="1"/>
        <end position="627"/>
    </location>
</feature>
<feature type="domain" description="GIY-YIG" evidence="1">
    <location>
        <begin position="26"/>
        <end position="105"/>
    </location>
</feature>
<feature type="domain" description="UVR" evidence="1">
    <location>
        <begin position="215"/>
        <end position="250"/>
    </location>
</feature>
<reference key="1">
    <citation type="journal article" date="2001" name="DNA Res.">
        <title>Complete genomic sequence of the filamentous nitrogen-fixing cyanobacterium Anabaena sp. strain PCC 7120.</title>
        <authorList>
            <person name="Kaneko T."/>
            <person name="Nakamura Y."/>
            <person name="Wolk C.P."/>
            <person name="Kuritz T."/>
            <person name="Sasamoto S."/>
            <person name="Watanabe A."/>
            <person name="Iriguchi M."/>
            <person name="Ishikawa A."/>
            <person name="Kawashima K."/>
            <person name="Kimura T."/>
            <person name="Kishida Y."/>
            <person name="Kohara M."/>
            <person name="Matsumoto M."/>
            <person name="Matsuno A."/>
            <person name="Muraki A."/>
            <person name="Nakazaki N."/>
            <person name="Shimpo S."/>
            <person name="Sugimoto M."/>
            <person name="Takazawa M."/>
            <person name="Yamada M."/>
            <person name="Yasuda M."/>
            <person name="Tabata S."/>
        </authorList>
    </citation>
    <scope>NUCLEOTIDE SEQUENCE [LARGE SCALE GENOMIC DNA]</scope>
    <source>
        <strain>PCC 7120 / SAG 25.82 / UTEX 2576</strain>
    </source>
</reference>
<evidence type="ECO:0000255" key="1">
    <source>
        <dbReference type="HAMAP-Rule" id="MF_00203"/>
    </source>
</evidence>
<keyword id="KW-0963">Cytoplasm</keyword>
<keyword id="KW-0227">DNA damage</keyword>
<keyword id="KW-0228">DNA excision</keyword>
<keyword id="KW-0234">DNA repair</keyword>
<keyword id="KW-0267">Excision nuclease</keyword>
<keyword id="KW-1185">Reference proteome</keyword>
<keyword id="KW-0742">SOS response</keyword>
<sequence length="627" mass="71697">MTTSAQILPLVKDPERLEARLSEIPPEPGVYFMRDGSDRIIYIGKSRKLRSRVRSYFREGYNKTERIATMAKLVTEIEFIVTDTEAEALALEANLIKQHQPYFNVLLKDDKKYPYVCITWSEDYPRIFITRKRQLGKEKDKYYGPYTDSGLLREILRISKRIFALRQRPQPLFKDRPCLNYDLGRCPGVCQQLISPEEYRKTVQKVAMVFQGRTQELIDILSEQMEKAAEALNFEVAARIRDQIAGLKSLTAEQKVSLPDDTVSRDAIALAGDAQHACIQLFQIRAGQLVGRLAFVAESHAEPGAILQRVLEEHYQTAESVEIPAEILVQHELPDAEILADVLTQLKGRKVTIFTPQRQVKAELIEMVERNAQYELQRMQKLGDRNHQATQDLAAILDLPNLPHRIEGYDISHIQGSNAVASQVVFIDGLPAKQNYRHYKIKNPTVTIGHSDDFASLAEVIQRRFRKYAEDPQLSRVGNPDWPDLIMIDGGKGQLSSVVTVLQEMNLLEDLRVISLAKRREEIFLPGESQPLKTDAEQPGVQLLRRLRDEAHRFAVSFHRQQRSDKLKRSRLDEIPGLGHHRQKQMLAHFRSVDYIRQATPSQIAEVPGIGPHLAQAIYDYFHPSHL</sequence>
<comment type="function">
    <text evidence="1">The UvrABC repair system catalyzes the recognition and processing of DNA lesions. UvrC both incises the 5' and 3' sides of the lesion. The N-terminal half is responsible for the 3' incision and the C-terminal half is responsible for the 5' incision.</text>
</comment>
<comment type="subunit">
    <text evidence="1">Interacts with UvrB in an incision complex.</text>
</comment>
<comment type="subcellular location">
    <subcellularLocation>
        <location evidence="1">Cytoplasm</location>
    </subcellularLocation>
</comment>
<comment type="similarity">
    <text evidence="1">Belongs to the UvrC family.</text>
</comment>
<gene>
    <name evidence="1" type="primary">uvrC</name>
    <name type="ordered locus">alr2728</name>
</gene>
<dbReference type="EMBL" id="BA000019">
    <property type="protein sequence ID" value="BAB74427.1"/>
    <property type="molecule type" value="Genomic_DNA"/>
</dbReference>
<dbReference type="PIR" id="AI2146">
    <property type="entry name" value="AI2146"/>
</dbReference>
<dbReference type="RefSeq" id="WP_010996881.1">
    <property type="nucleotide sequence ID" value="NZ_RSCN01000030.1"/>
</dbReference>
<dbReference type="SMR" id="Q8YTI9"/>
<dbReference type="STRING" id="103690.gene:10494761"/>
<dbReference type="KEGG" id="ana:alr2728"/>
<dbReference type="eggNOG" id="COG0322">
    <property type="taxonomic scope" value="Bacteria"/>
</dbReference>
<dbReference type="OrthoDB" id="9804933at2"/>
<dbReference type="Proteomes" id="UP000002483">
    <property type="component" value="Chromosome"/>
</dbReference>
<dbReference type="GO" id="GO:0005737">
    <property type="term" value="C:cytoplasm"/>
    <property type="evidence" value="ECO:0007669"/>
    <property type="project" value="UniProtKB-SubCell"/>
</dbReference>
<dbReference type="GO" id="GO:0009380">
    <property type="term" value="C:excinuclease repair complex"/>
    <property type="evidence" value="ECO:0007669"/>
    <property type="project" value="InterPro"/>
</dbReference>
<dbReference type="GO" id="GO:0003677">
    <property type="term" value="F:DNA binding"/>
    <property type="evidence" value="ECO:0007669"/>
    <property type="project" value="UniProtKB-UniRule"/>
</dbReference>
<dbReference type="GO" id="GO:0009381">
    <property type="term" value="F:excinuclease ABC activity"/>
    <property type="evidence" value="ECO:0007669"/>
    <property type="project" value="UniProtKB-UniRule"/>
</dbReference>
<dbReference type="GO" id="GO:0006289">
    <property type="term" value="P:nucleotide-excision repair"/>
    <property type="evidence" value="ECO:0007669"/>
    <property type="project" value="UniProtKB-UniRule"/>
</dbReference>
<dbReference type="GO" id="GO:0009432">
    <property type="term" value="P:SOS response"/>
    <property type="evidence" value="ECO:0007669"/>
    <property type="project" value="UniProtKB-UniRule"/>
</dbReference>
<dbReference type="CDD" id="cd10434">
    <property type="entry name" value="GIY-YIG_UvrC_Cho"/>
    <property type="match status" value="1"/>
</dbReference>
<dbReference type="FunFam" id="3.40.1440.10:FF:000001">
    <property type="entry name" value="UvrABC system protein C"/>
    <property type="match status" value="1"/>
</dbReference>
<dbReference type="Gene3D" id="1.10.150.20">
    <property type="entry name" value="5' to 3' exonuclease, C-terminal subdomain"/>
    <property type="match status" value="1"/>
</dbReference>
<dbReference type="Gene3D" id="3.40.1440.10">
    <property type="entry name" value="GIY-YIG endonuclease"/>
    <property type="match status" value="1"/>
</dbReference>
<dbReference type="Gene3D" id="4.10.860.10">
    <property type="entry name" value="UVR domain"/>
    <property type="match status" value="1"/>
</dbReference>
<dbReference type="Gene3D" id="3.30.420.340">
    <property type="entry name" value="UvrC, RNAse H endonuclease domain"/>
    <property type="match status" value="1"/>
</dbReference>
<dbReference type="HAMAP" id="MF_00203">
    <property type="entry name" value="UvrC"/>
    <property type="match status" value="1"/>
</dbReference>
<dbReference type="InterPro" id="IPR041663">
    <property type="entry name" value="DisA/LigA_HHH"/>
</dbReference>
<dbReference type="InterPro" id="IPR000305">
    <property type="entry name" value="GIY-YIG_endonuc"/>
</dbReference>
<dbReference type="InterPro" id="IPR035901">
    <property type="entry name" value="GIY-YIG_endonuc_sf"/>
</dbReference>
<dbReference type="InterPro" id="IPR047296">
    <property type="entry name" value="GIY-YIG_UvrC_Cho"/>
</dbReference>
<dbReference type="InterPro" id="IPR003583">
    <property type="entry name" value="Hlx-hairpin-Hlx_DNA-bd_motif"/>
</dbReference>
<dbReference type="InterPro" id="IPR010994">
    <property type="entry name" value="RuvA_2-like"/>
</dbReference>
<dbReference type="InterPro" id="IPR001943">
    <property type="entry name" value="UVR_dom"/>
</dbReference>
<dbReference type="InterPro" id="IPR036876">
    <property type="entry name" value="UVR_dom_sf"/>
</dbReference>
<dbReference type="InterPro" id="IPR050066">
    <property type="entry name" value="UvrABC_protein_C"/>
</dbReference>
<dbReference type="InterPro" id="IPR004791">
    <property type="entry name" value="UvrC"/>
</dbReference>
<dbReference type="InterPro" id="IPR001162">
    <property type="entry name" value="UvrC_RNase_H_dom"/>
</dbReference>
<dbReference type="InterPro" id="IPR038476">
    <property type="entry name" value="UvrC_RNase_H_dom_sf"/>
</dbReference>
<dbReference type="NCBIfam" id="NF001824">
    <property type="entry name" value="PRK00558.1-5"/>
    <property type="match status" value="1"/>
</dbReference>
<dbReference type="NCBIfam" id="TIGR00194">
    <property type="entry name" value="uvrC"/>
    <property type="match status" value="1"/>
</dbReference>
<dbReference type="PANTHER" id="PTHR30562:SF1">
    <property type="entry name" value="UVRABC SYSTEM PROTEIN C"/>
    <property type="match status" value="1"/>
</dbReference>
<dbReference type="PANTHER" id="PTHR30562">
    <property type="entry name" value="UVRC/OXIDOREDUCTASE"/>
    <property type="match status" value="1"/>
</dbReference>
<dbReference type="Pfam" id="PF01541">
    <property type="entry name" value="GIY-YIG"/>
    <property type="match status" value="1"/>
</dbReference>
<dbReference type="Pfam" id="PF12826">
    <property type="entry name" value="HHH_2"/>
    <property type="match status" value="1"/>
</dbReference>
<dbReference type="Pfam" id="PF02151">
    <property type="entry name" value="UVR"/>
    <property type="match status" value="1"/>
</dbReference>
<dbReference type="Pfam" id="PF22920">
    <property type="entry name" value="UvrC_RNaseH"/>
    <property type="match status" value="1"/>
</dbReference>
<dbReference type="Pfam" id="PF08459">
    <property type="entry name" value="UvrC_RNaseH_dom"/>
    <property type="match status" value="1"/>
</dbReference>
<dbReference type="SMART" id="SM00465">
    <property type="entry name" value="GIYc"/>
    <property type="match status" value="1"/>
</dbReference>
<dbReference type="SMART" id="SM00278">
    <property type="entry name" value="HhH1"/>
    <property type="match status" value="2"/>
</dbReference>
<dbReference type="SUPFAM" id="SSF46600">
    <property type="entry name" value="C-terminal UvrC-binding domain of UvrB"/>
    <property type="match status" value="1"/>
</dbReference>
<dbReference type="SUPFAM" id="SSF82771">
    <property type="entry name" value="GIY-YIG endonuclease"/>
    <property type="match status" value="1"/>
</dbReference>
<dbReference type="SUPFAM" id="SSF47781">
    <property type="entry name" value="RuvA domain 2-like"/>
    <property type="match status" value="1"/>
</dbReference>
<dbReference type="PROSITE" id="PS50164">
    <property type="entry name" value="GIY_YIG"/>
    <property type="match status" value="1"/>
</dbReference>
<dbReference type="PROSITE" id="PS50151">
    <property type="entry name" value="UVR"/>
    <property type="match status" value="1"/>
</dbReference>
<dbReference type="PROSITE" id="PS50165">
    <property type="entry name" value="UVRC"/>
    <property type="match status" value="1"/>
</dbReference>
<name>UVRC_NOSS1</name>
<protein>
    <recommendedName>
        <fullName evidence="1">UvrABC system protein C</fullName>
        <shortName evidence="1">Protein UvrC</shortName>
    </recommendedName>
    <alternativeName>
        <fullName evidence="1">Excinuclease ABC subunit C</fullName>
    </alternativeName>
</protein>
<accession>Q8YTI9</accession>